<organism>
    <name type="scientific">Malacoplasma penetrans (strain HF-2)</name>
    <name type="common">Mycoplasma penetrans</name>
    <dbReference type="NCBI Taxonomy" id="272633"/>
    <lineage>
        <taxon>Bacteria</taxon>
        <taxon>Bacillati</taxon>
        <taxon>Mycoplasmatota</taxon>
        <taxon>Mycoplasmoidales</taxon>
        <taxon>Mycoplasmoidaceae</taxon>
        <taxon>Malacoplasma</taxon>
    </lineage>
</organism>
<protein>
    <recommendedName>
        <fullName evidence="1">Chaperonin GroEL</fullName>
        <ecNumber evidence="1">5.6.1.7</ecNumber>
    </recommendedName>
    <alternativeName>
        <fullName evidence="1">60 kDa chaperonin</fullName>
    </alternativeName>
    <alternativeName>
        <fullName evidence="1">Chaperonin-60</fullName>
        <shortName evidence="1">Cpn60</shortName>
    </alternativeName>
</protein>
<sequence length="545" mass="58655">MAKEIKFSDSARNKLFNGVQQLFDAVKVTMGPRGRNVLIQKSYGAPVITKDGVSVAKEVDLTNPIENMGAQLVKDVASKTADEAGDGTTTATVLAYGVFKEGLRNVISGANPIEIKRGMDKTVNAIVNELNKSSKKIARKDEIIQVATISANSDKKIGELIANAMEKVGSDGVITVEEAKGINDELTVVEGMQFDRGYISPYFVTDTNKMIAKLENPYILITDKKVSSIKDILPILEEIMKTGRPLLIIADDVDGEALTTLVVNKMRGVFNVVAVKAPEFGDKRKQVLEDIAILTGGSFVTDDLGISFDKVTLQDLGQAESVVIDKDNSTIVKGKGLESQIKERISKIKTAIEMTDSDYDKDSLRNRLAKLNKGVAVIKVGAVSEVELKEKKDRVDDALSATKAAIEEGIVIGGGAALVHVSKRINVNTLNLIGDEKIGYQIVMSAIMSPISQIVSNAGFDKGVVINEILKATNPHLGFNAATGKYVDMFQTGIIDPVKVTRIALQNAVSVSSMLLTTEAVIYDVKDDKEDSVPAMPNMGMGGMM</sequence>
<comment type="function">
    <text evidence="1">Together with its co-chaperonin GroES, plays an essential role in assisting protein folding. The GroEL-GroES system forms a nano-cage that allows encapsulation of the non-native substrate proteins and provides a physical environment optimized to promote and accelerate protein folding.</text>
</comment>
<comment type="catalytic activity">
    <reaction evidence="1">
        <text>ATP + H2O + a folded polypeptide = ADP + phosphate + an unfolded polypeptide.</text>
        <dbReference type="EC" id="5.6.1.7"/>
    </reaction>
</comment>
<comment type="subunit">
    <text evidence="1">Forms a cylinder of 14 subunits composed of two heptameric rings stacked back-to-back. Interacts with the co-chaperonin GroES.</text>
</comment>
<comment type="subcellular location">
    <subcellularLocation>
        <location evidence="1">Cytoplasm</location>
    </subcellularLocation>
</comment>
<comment type="similarity">
    <text evidence="1">Belongs to the chaperonin (HSP60) family.</text>
</comment>
<feature type="chain" id="PRO_0000063443" description="Chaperonin GroEL">
    <location>
        <begin position="1"/>
        <end position="545"/>
    </location>
</feature>
<feature type="binding site" evidence="1">
    <location>
        <begin position="29"/>
        <end position="32"/>
    </location>
    <ligand>
        <name>ATP</name>
        <dbReference type="ChEBI" id="CHEBI:30616"/>
    </ligand>
</feature>
<feature type="binding site" evidence="1">
    <location>
        <position position="50"/>
    </location>
    <ligand>
        <name>ATP</name>
        <dbReference type="ChEBI" id="CHEBI:30616"/>
    </ligand>
</feature>
<feature type="binding site" evidence="1">
    <location>
        <begin position="86"/>
        <end position="90"/>
    </location>
    <ligand>
        <name>ATP</name>
        <dbReference type="ChEBI" id="CHEBI:30616"/>
    </ligand>
</feature>
<feature type="binding site" evidence="1">
    <location>
        <position position="414"/>
    </location>
    <ligand>
        <name>ATP</name>
        <dbReference type="ChEBI" id="CHEBI:30616"/>
    </ligand>
</feature>
<feature type="binding site" evidence="1">
    <location>
        <begin position="480"/>
        <end position="482"/>
    </location>
    <ligand>
        <name>ATP</name>
        <dbReference type="ChEBI" id="CHEBI:30616"/>
    </ligand>
</feature>
<feature type="binding site" evidence="1">
    <location>
        <position position="496"/>
    </location>
    <ligand>
        <name>ATP</name>
        <dbReference type="ChEBI" id="CHEBI:30616"/>
    </ligand>
</feature>
<gene>
    <name evidence="1" type="primary">groEL</name>
    <name evidence="1" type="synonym">groL</name>
    <name type="ordered locus">MYPE990</name>
</gene>
<proteinExistence type="inferred from homology"/>
<keyword id="KW-0067">ATP-binding</keyword>
<keyword id="KW-0143">Chaperone</keyword>
<keyword id="KW-0963">Cytoplasm</keyword>
<keyword id="KW-0413">Isomerase</keyword>
<keyword id="KW-0547">Nucleotide-binding</keyword>
<keyword id="KW-1185">Reference proteome</keyword>
<accession>Q8CXQ7</accession>
<dbReference type="EC" id="5.6.1.7" evidence="1"/>
<dbReference type="EMBL" id="BA000026">
    <property type="protein sequence ID" value="BAC43890.1"/>
    <property type="molecule type" value="Genomic_DNA"/>
</dbReference>
<dbReference type="RefSeq" id="WP_011076926.1">
    <property type="nucleotide sequence ID" value="NC_004432.1"/>
</dbReference>
<dbReference type="SMR" id="Q8CXQ7"/>
<dbReference type="FunCoup" id="Q8CXQ7">
    <property type="interactions" value="246"/>
</dbReference>
<dbReference type="STRING" id="272633.gene:10731191"/>
<dbReference type="KEGG" id="mpe:MYPE990"/>
<dbReference type="eggNOG" id="COG0459">
    <property type="taxonomic scope" value="Bacteria"/>
</dbReference>
<dbReference type="HOGENOM" id="CLU_016503_3_0_14"/>
<dbReference type="InParanoid" id="Q8CXQ7"/>
<dbReference type="Proteomes" id="UP000002522">
    <property type="component" value="Chromosome"/>
</dbReference>
<dbReference type="GO" id="GO:0005737">
    <property type="term" value="C:cytoplasm"/>
    <property type="evidence" value="ECO:0007669"/>
    <property type="project" value="UniProtKB-SubCell"/>
</dbReference>
<dbReference type="GO" id="GO:0005524">
    <property type="term" value="F:ATP binding"/>
    <property type="evidence" value="ECO:0007669"/>
    <property type="project" value="UniProtKB-UniRule"/>
</dbReference>
<dbReference type="GO" id="GO:0140662">
    <property type="term" value="F:ATP-dependent protein folding chaperone"/>
    <property type="evidence" value="ECO:0007669"/>
    <property type="project" value="InterPro"/>
</dbReference>
<dbReference type="GO" id="GO:0016853">
    <property type="term" value="F:isomerase activity"/>
    <property type="evidence" value="ECO:0007669"/>
    <property type="project" value="UniProtKB-KW"/>
</dbReference>
<dbReference type="GO" id="GO:0051082">
    <property type="term" value="F:unfolded protein binding"/>
    <property type="evidence" value="ECO:0007669"/>
    <property type="project" value="UniProtKB-UniRule"/>
</dbReference>
<dbReference type="GO" id="GO:0042026">
    <property type="term" value="P:protein refolding"/>
    <property type="evidence" value="ECO:0007669"/>
    <property type="project" value="UniProtKB-UniRule"/>
</dbReference>
<dbReference type="CDD" id="cd03344">
    <property type="entry name" value="GroEL"/>
    <property type="match status" value="1"/>
</dbReference>
<dbReference type="FunFam" id="3.50.7.10:FF:000001">
    <property type="entry name" value="60 kDa chaperonin"/>
    <property type="match status" value="1"/>
</dbReference>
<dbReference type="Gene3D" id="3.50.7.10">
    <property type="entry name" value="GroEL"/>
    <property type="match status" value="1"/>
</dbReference>
<dbReference type="Gene3D" id="1.10.560.10">
    <property type="entry name" value="GroEL-like equatorial domain"/>
    <property type="match status" value="1"/>
</dbReference>
<dbReference type="Gene3D" id="3.30.260.10">
    <property type="entry name" value="TCP-1-like chaperonin intermediate domain"/>
    <property type="match status" value="1"/>
</dbReference>
<dbReference type="HAMAP" id="MF_00600">
    <property type="entry name" value="CH60"/>
    <property type="match status" value="1"/>
</dbReference>
<dbReference type="InterPro" id="IPR018370">
    <property type="entry name" value="Chaperonin_Cpn60_CS"/>
</dbReference>
<dbReference type="InterPro" id="IPR001844">
    <property type="entry name" value="Cpn60/GroEL"/>
</dbReference>
<dbReference type="InterPro" id="IPR002423">
    <property type="entry name" value="Cpn60/GroEL/TCP-1"/>
</dbReference>
<dbReference type="InterPro" id="IPR027409">
    <property type="entry name" value="GroEL-like_apical_dom_sf"/>
</dbReference>
<dbReference type="InterPro" id="IPR027413">
    <property type="entry name" value="GROEL-like_equatorial_sf"/>
</dbReference>
<dbReference type="InterPro" id="IPR027410">
    <property type="entry name" value="TCP-1-like_intermed_sf"/>
</dbReference>
<dbReference type="NCBIfam" id="TIGR02348">
    <property type="entry name" value="GroEL"/>
    <property type="match status" value="1"/>
</dbReference>
<dbReference type="NCBIfam" id="NF000592">
    <property type="entry name" value="PRK00013.1"/>
    <property type="match status" value="1"/>
</dbReference>
<dbReference type="NCBIfam" id="NF009487">
    <property type="entry name" value="PRK12849.1"/>
    <property type="match status" value="1"/>
</dbReference>
<dbReference type="NCBIfam" id="NF009488">
    <property type="entry name" value="PRK12850.1"/>
    <property type="match status" value="1"/>
</dbReference>
<dbReference type="NCBIfam" id="NF009489">
    <property type="entry name" value="PRK12851.1"/>
    <property type="match status" value="1"/>
</dbReference>
<dbReference type="PANTHER" id="PTHR45633">
    <property type="entry name" value="60 KDA HEAT SHOCK PROTEIN, MITOCHONDRIAL"/>
    <property type="match status" value="1"/>
</dbReference>
<dbReference type="Pfam" id="PF00118">
    <property type="entry name" value="Cpn60_TCP1"/>
    <property type="match status" value="1"/>
</dbReference>
<dbReference type="PRINTS" id="PR00298">
    <property type="entry name" value="CHAPERONIN60"/>
</dbReference>
<dbReference type="SUPFAM" id="SSF52029">
    <property type="entry name" value="GroEL apical domain-like"/>
    <property type="match status" value="1"/>
</dbReference>
<dbReference type="SUPFAM" id="SSF48592">
    <property type="entry name" value="GroEL equatorial domain-like"/>
    <property type="match status" value="1"/>
</dbReference>
<dbReference type="SUPFAM" id="SSF54849">
    <property type="entry name" value="GroEL-intermediate domain like"/>
    <property type="match status" value="1"/>
</dbReference>
<dbReference type="PROSITE" id="PS00296">
    <property type="entry name" value="CHAPERONINS_CPN60"/>
    <property type="match status" value="1"/>
</dbReference>
<name>CH60_MALP2</name>
<evidence type="ECO:0000255" key="1">
    <source>
        <dbReference type="HAMAP-Rule" id="MF_00600"/>
    </source>
</evidence>
<reference key="1">
    <citation type="journal article" date="2002" name="Nucleic Acids Res.">
        <title>The complete genomic sequence of Mycoplasma penetrans, an intracellular bacterial pathogen in humans.</title>
        <authorList>
            <person name="Sasaki Y."/>
            <person name="Ishikawa J."/>
            <person name="Yamashita A."/>
            <person name="Oshima K."/>
            <person name="Kenri T."/>
            <person name="Furuya K."/>
            <person name="Yoshino C."/>
            <person name="Horino A."/>
            <person name="Shiba T."/>
            <person name="Sasaki T."/>
            <person name="Hattori M."/>
        </authorList>
    </citation>
    <scope>NUCLEOTIDE SEQUENCE [LARGE SCALE GENOMIC DNA]</scope>
    <source>
        <strain>HF-2</strain>
    </source>
</reference>